<keyword id="KW-0067">ATP-binding</keyword>
<keyword id="KW-1003">Cell membrane</keyword>
<keyword id="KW-0325">Glycoprotein</keyword>
<keyword id="KW-0472">Membrane</keyword>
<keyword id="KW-0547">Nucleotide-binding</keyword>
<keyword id="KW-0677">Repeat</keyword>
<keyword id="KW-0812">Transmembrane</keyword>
<keyword id="KW-1133">Transmembrane helix</keyword>
<keyword id="KW-0813">Transport</keyword>
<reference key="1">
    <citation type="journal article" date="2012" name="MBio">
        <title>Comparative genome analysis of Trichophyton rubrum and related dermatophytes reveals candidate genes involved in infection.</title>
        <authorList>
            <person name="Martinez D.A."/>
            <person name="Oliver B.G."/>
            <person name="Graeser Y."/>
            <person name="Goldberg J.M."/>
            <person name="Li W."/>
            <person name="Martinez-Rossi N.M."/>
            <person name="Monod M."/>
            <person name="Shelest E."/>
            <person name="Barton R.C."/>
            <person name="Birch E."/>
            <person name="Brakhage A.A."/>
            <person name="Chen Z."/>
            <person name="Gurr S.J."/>
            <person name="Heiman D."/>
            <person name="Heitman J."/>
            <person name="Kosti I."/>
            <person name="Rossi A."/>
            <person name="Saif S."/>
            <person name="Samalova M."/>
            <person name="Saunders C.W."/>
            <person name="Shea T."/>
            <person name="Summerbell R.C."/>
            <person name="Xu J."/>
            <person name="Young S."/>
            <person name="Zeng Q."/>
            <person name="Birren B.W."/>
            <person name="Cuomo C.A."/>
            <person name="White T.C."/>
        </authorList>
    </citation>
    <scope>NUCLEOTIDE SEQUENCE [LARGE SCALE GENOMIC DNA]</scope>
    <source>
        <strain>CBS 112818</strain>
    </source>
</reference>
<reference key="2">
    <citation type="journal article" date="2016" name="J. Med. Microbiol.">
        <title>Compensatory expression of multidrug-resistance genes encoding ABC transporters in dermatophytes.</title>
        <authorList>
            <person name="Martins M.P."/>
            <person name="Franceschini A.C.C."/>
            <person name="Jacob T.R."/>
            <person name="Rossi A."/>
            <person name="Martinez-Rossi N.M."/>
        </authorList>
    </citation>
    <scope>INDUCTION</scope>
</reference>
<dbReference type="EMBL" id="GG698478">
    <property type="protein sequence ID" value="EGD93160.1"/>
    <property type="molecule type" value="Genomic_DNA"/>
</dbReference>
<dbReference type="SMR" id="F2RPA4"/>
<dbReference type="GlyCosmos" id="F2RPA4">
    <property type="glycosylation" value="4 sites, No reported glycans"/>
</dbReference>
<dbReference type="HOGENOM" id="CLU_000604_17_2_1"/>
<dbReference type="OrthoDB" id="4324at34384"/>
<dbReference type="Proteomes" id="UP000009172">
    <property type="component" value="Unassembled WGS sequence"/>
</dbReference>
<dbReference type="GO" id="GO:0005743">
    <property type="term" value="C:mitochondrial inner membrane"/>
    <property type="evidence" value="ECO:0007669"/>
    <property type="project" value="TreeGrafter"/>
</dbReference>
<dbReference type="GO" id="GO:0005886">
    <property type="term" value="C:plasma membrane"/>
    <property type="evidence" value="ECO:0007669"/>
    <property type="project" value="UniProtKB-SubCell"/>
</dbReference>
<dbReference type="GO" id="GO:0015421">
    <property type="term" value="F:ABC-type oligopeptide transporter activity"/>
    <property type="evidence" value="ECO:0007669"/>
    <property type="project" value="TreeGrafter"/>
</dbReference>
<dbReference type="GO" id="GO:0005524">
    <property type="term" value="F:ATP binding"/>
    <property type="evidence" value="ECO:0007669"/>
    <property type="project" value="UniProtKB-KW"/>
</dbReference>
<dbReference type="GO" id="GO:0016887">
    <property type="term" value="F:ATP hydrolysis activity"/>
    <property type="evidence" value="ECO:0007669"/>
    <property type="project" value="InterPro"/>
</dbReference>
<dbReference type="GO" id="GO:0090374">
    <property type="term" value="P:oligopeptide export from mitochondrion"/>
    <property type="evidence" value="ECO:0007669"/>
    <property type="project" value="TreeGrafter"/>
</dbReference>
<dbReference type="CDD" id="cd18577">
    <property type="entry name" value="ABC_6TM_Pgp_ABCB1_D1_like"/>
    <property type="match status" value="1"/>
</dbReference>
<dbReference type="CDD" id="cd18578">
    <property type="entry name" value="ABC_6TM_Pgp_ABCB1_D2_like"/>
    <property type="match status" value="1"/>
</dbReference>
<dbReference type="FunFam" id="3.40.50.300:FF:000913">
    <property type="entry name" value="ABC multidrug transporter SitT"/>
    <property type="match status" value="1"/>
</dbReference>
<dbReference type="Gene3D" id="1.20.1560.10">
    <property type="entry name" value="ABC transporter type 1, transmembrane domain"/>
    <property type="match status" value="3"/>
</dbReference>
<dbReference type="Gene3D" id="3.40.50.300">
    <property type="entry name" value="P-loop containing nucleotide triphosphate hydrolases"/>
    <property type="match status" value="2"/>
</dbReference>
<dbReference type="InterPro" id="IPR003593">
    <property type="entry name" value="AAA+_ATPase"/>
</dbReference>
<dbReference type="InterPro" id="IPR011527">
    <property type="entry name" value="ABC1_TM_dom"/>
</dbReference>
<dbReference type="InterPro" id="IPR036640">
    <property type="entry name" value="ABC1_TM_sf"/>
</dbReference>
<dbReference type="InterPro" id="IPR003439">
    <property type="entry name" value="ABC_transporter-like_ATP-bd"/>
</dbReference>
<dbReference type="InterPro" id="IPR017871">
    <property type="entry name" value="ABC_transporter-like_CS"/>
</dbReference>
<dbReference type="InterPro" id="IPR027417">
    <property type="entry name" value="P-loop_NTPase"/>
</dbReference>
<dbReference type="InterPro" id="IPR039421">
    <property type="entry name" value="Type_1_exporter"/>
</dbReference>
<dbReference type="PANTHER" id="PTHR43394:SF11">
    <property type="entry name" value="ATP-BINDING CASSETTE TRANSPORTER"/>
    <property type="match status" value="1"/>
</dbReference>
<dbReference type="PANTHER" id="PTHR43394">
    <property type="entry name" value="ATP-DEPENDENT PERMEASE MDL1, MITOCHONDRIAL"/>
    <property type="match status" value="1"/>
</dbReference>
<dbReference type="Pfam" id="PF00664">
    <property type="entry name" value="ABC_membrane"/>
    <property type="match status" value="3"/>
</dbReference>
<dbReference type="Pfam" id="PF00005">
    <property type="entry name" value="ABC_tran"/>
    <property type="match status" value="2"/>
</dbReference>
<dbReference type="SMART" id="SM00382">
    <property type="entry name" value="AAA"/>
    <property type="match status" value="2"/>
</dbReference>
<dbReference type="SUPFAM" id="SSF90123">
    <property type="entry name" value="ABC transporter transmembrane region"/>
    <property type="match status" value="2"/>
</dbReference>
<dbReference type="SUPFAM" id="SSF52540">
    <property type="entry name" value="P-loop containing nucleoside triphosphate hydrolases"/>
    <property type="match status" value="2"/>
</dbReference>
<dbReference type="PROSITE" id="PS50929">
    <property type="entry name" value="ABC_TM1F"/>
    <property type="match status" value="2"/>
</dbReference>
<dbReference type="PROSITE" id="PS00211">
    <property type="entry name" value="ABC_TRANSPORTER_1"/>
    <property type="match status" value="2"/>
</dbReference>
<dbReference type="PROSITE" id="PS50893">
    <property type="entry name" value="ABC_TRANSPORTER_2"/>
    <property type="match status" value="2"/>
</dbReference>
<evidence type="ECO:0000255" key="1"/>
<evidence type="ECO:0000255" key="2">
    <source>
        <dbReference type="PROSITE-ProRule" id="PRU00434"/>
    </source>
</evidence>
<evidence type="ECO:0000255" key="3">
    <source>
        <dbReference type="PROSITE-ProRule" id="PRU00441"/>
    </source>
</evidence>
<evidence type="ECO:0000255" key="4">
    <source>
        <dbReference type="PROSITE-ProRule" id="PRU00498"/>
    </source>
</evidence>
<evidence type="ECO:0000256" key="5">
    <source>
        <dbReference type="SAM" id="MobiDB-lite"/>
    </source>
</evidence>
<evidence type="ECO:0000269" key="6">
    <source>
    </source>
</evidence>
<evidence type="ECO:0000303" key="7">
    <source>
    </source>
</evidence>
<evidence type="ECO:0000305" key="8"/>
<proteinExistence type="evidence at transcript level"/>
<name>MDR4_TRIT1</name>
<comment type="function">
    <text evidence="8">Pleiotropic ABC efflux transporter that may be involved in the modulation susceptibility to a wide range of unrelated cytotoxic compounds.</text>
</comment>
<comment type="subcellular location">
    <subcellularLocation>
        <location evidence="8">Cell membrane</location>
        <topology evidence="1">Multi-pass membrane protein</topology>
    </subcellularLocation>
</comment>
<comment type="induction">
    <text evidence="6">Expression is induced upon exposure the allylamine terbinafine and the azole itraconazole.</text>
</comment>
<comment type="similarity">
    <text evidence="8">Belongs to the ABC transporter superfamily. ABCB family. Multidrug resistance exporter (TC 3.A.1.201) subfamily.</text>
</comment>
<protein>
    <recommendedName>
        <fullName evidence="7">ABC multidrug transporter MDR2</fullName>
    </recommendedName>
    <alternativeName>
        <fullName evidence="7">Multidrug resistance protein 2</fullName>
    </alternativeName>
</protein>
<feature type="chain" id="PRO_0000447185" description="ABC multidrug transporter MDR2">
    <location>
        <begin position="1"/>
        <end position="1363"/>
    </location>
</feature>
<feature type="transmembrane region" description="Helical" evidence="1 3">
    <location>
        <begin position="65"/>
        <end position="85"/>
    </location>
</feature>
<feature type="transmembrane region" description="Helical" evidence="1 3">
    <location>
        <begin position="119"/>
        <end position="139"/>
    </location>
</feature>
<feature type="transmembrane region" description="Helical" evidence="1 3">
    <location>
        <begin position="193"/>
        <end position="213"/>
    </location>
</feature>
<feature type="transmembrane region" description="Helical" evidence="1 3">
    <location>
        <begin position="215"/>
        <end position="235"/>
    </location>
</feature>
<feature type="transmembrane region" description="Helical" evidence="1 3">
    <location>
        <begin position="301"/>
        <end position="321"/>
    </location>
</feature>
<feature type="transmembrane region" description="Helical" evidence="1 3">
    <location>
        <begin position="336"/>
        <end position="356"/>
    </location>
</feature>
<feature type="transmembrane region" description="Helical" evidence="1 3">
    <location>
        <begin position="781"/>
        <end position="801"/>
    </location>
</feature>
<feature type="transmembrane region" description="Helical" evidence="1 3">
    <location>
        <begin position="820"/>
        <end position="840"/>
    </location>
</feature>
<feature type="transmembrane region" description="Helical" evidence="1 3">
    <location>
        <begin position="896"/>
        <end position="916"/>
    </location>
</feature>
<feature type="transmembrane region" description="Helical" evidence="1 3">
    <location>
        <begin position="992"/>
        <end position="1012"/>
    </location>
</feature>
<feature type="transmembrane region" description="Helical" evidence="1 3">
    <location>
        <begin position="1016"/>
        <end position="1036"/>
    </location>
</feature>
<feature type="domain" description="ABC transmembrane type-1 1" evidence="3">
    <location>
        <begin position="69"/>
        <end position="367"/>
    </location>
</feature>
<feature type="domain" description="ABC transporter 1" evidence="2">
    <location>
        <begin position="403"/>
        <end position="682"/>
    </location>
</feature>
<feature type="domain" description="ABC transmembrane type-1 2" evidence="3">
    <location>
        <begin position="781"/>
        <end position="1052"/>
    </location>
</feature>
<feature type="domain" description="ABC transporter 2" evidence="2">
    <location>
        <begin position="1119"/>
        <end position="1358"/>
    </location>
</feature>
<feature type="region of interest" description="Disordered" evidence="5">
    <location>
        <begin position="738"/>
        <end position="758"/>
    </location>
</feature>
<feature type="binding site" evidence="2">
    <location>
        <begin position="438"/>
        <end position="445"/>
    </location>
    <ligand>
        <name>ATP</name>
        <dbReference type="ChEBI" id="CHEBI:30616"/>
    </ligand>
</feature>
<feature type="binding site" evidence="2">
    <location>
        <begin position="1154"/>
        <end position="1161"/>
    </location>
    <ligand>
        <name>ATP</name>
        <dbReference type="ChEBI" id="CHEBI:30616"/>
    </ligand>
</feature>
<feature type="glycosylation site" description="N-linked (GlcNAc...) asparagine" evidence="4">
    <location>
        <position position="97"/>
    </location>
</feature>
<feature type="glycosylation site" description="N-linked (GlcNAc...) asparagine" evidence="4">
    <location>
        <position position="552"/>
    </location>
</feature>
<feature type="glycosylation site" description="N-linked (GlcNAc...) asparagine" evidence="4">
    <location>
        <position position="633"/>
    </location>
</feature>
<feature type="glycosylation site" description="N-linked (GlcNAc...) asparagine" evidence="4">
    <location>
        <position position="973"/>
    </location>
</feature>
<sequence>MAVEEKNSPTGAAMTNTGILVPSSQQSLPEWWTKTQKFFSRENTITPTFGYFRLLFGTQPGKTDIALIVIGTIAGIGAGIPFPLLGILFGELVDDLNSSTCSTTQAPPGGYQAAITTKVLQVIYVSILNFVCMYIHTGCWSMVGERLVRRLRTKYFHSLLRQEIAFTDTLPSGDVTSRLVSDIEVIQAGTSEKVGLFIGTISYFVAAYIVAFLKVATIAAMLMSVVPIYFLMAFGGGHYIKKYSGRISTHINAATSIVSSSLSHMSIVHAFNANARLEALFAQHLVSARMDALKKAITHSIQFGMLYFVAYASNALAFWQGSRMIADLAEGKPSKVSVGAVYTVIFVLLDASFVLSQMAPFMHIFASAASAGDRLMTTIKRQSAIDGTSSEGDSTISLASEEIELQDVTFNYPARPEVPVLQGVSFKIPPNKHTAIVGTSGSGKSTVVALLERLYDPITGCVRVGNRDLKEINVRHLRGSIGLVQQEPNLLDRSILENIAHGLVSSSQEKHKHLLPTLLGPSLSELTEKIRQGASEDEAVTEQGDVVREIVNLTRHAATLSNAIDFINALPDGLATRVGSSGAELSGGQKQRIALARALIRDPPVLLLDEATAALDSTSERLIQAALNKVSENVTTVSIAHRLATAKDADNIIVMQKGRVMEQGTHMDLVARDGVYAGMVRLQNIGKFSSSSSIMTESTQVDANIDRSLTTDTLLNKEEKLSLEQGVLDEKEKPAQLYMPEEADSLPTEPENEKEKPKQTLWATMKGSFPLIRPNILLISLGLITSIMIGVSYTGEAVIFGHTVGSLSVCRGGPSIRSSGMLFGLLFFILAIVKFAAVIVNGAAFGWAAEKTLYRTRVLSLRSLLRQPLEWHNADGRTPGLLVALVTSDASALSSLTGTTIGVLFSTVANLFAGVILSQCHRMEDSRSPSGYLTRIKHQKAYAKATAITVESVDNIKSIAAFSLEQEAYSVFNRSLKAPYKSNMKSVLHGNFWLSLAYSISTLVYALAYWWGSQQILAGMYTQVQFFIVLPALLFSTQSCGQMFALVPDISKARIAASNIVDLLSIKHEGDEEYDKTGSKASAKHTDPRFNMLEDKPRDVEAQLITTTPSSFPTKGMGVQFRNVHFRYPSRPNQPALDDLSINISPGQFCALVGPSGSGKSTTFALLEKFYNPASGSIIIDGVDITKQSGAAFRDTIALVPQENVMFEGTVAFNIGLGARPDVEATQEEIEEACRLANIHDTIAALPDGYNTVCSQDGKQFSGGQRQRLSIARALVRKPRLLLLDESTSALDVESEKHVQDALAKVARKTTIVAIAHRLNTIHRADRIFMIERGRCVDQGTHAELVERCESYRANVIHQSLDA</sequence>
<gene>
    <name evidence="7" type="primary">MDR4</name>
    <name type="ORF">TESG_00713</name>
</gene>
<organism>
    <name type="scientific">Trichophyton tonsurans (strain CBS 112818)</name>
    <name type="common">Scalp ringworm fungus</name>
    <dbReference type="NCBI Taxonomy" id="647933"/>
    <lineage>
        <taxon>Eukaryota</taxon>
        <taxon>Fungi</taxon>
        <taxon>Dikarya</taxon>
        <taxon>Ascomycota</taxon>
        <taxon>Pezizomycotina</taxon>
        <taxon>Eurotiomycetes</taxon>
        <taxon>Eurotiomycetidae</taxon>
        <taxon>Onygenales</taxon>
        <taxon>Arthrodermataceae</taxon>
        <taxon>Trichophyton</taxon>
    </lineage>
</organism>
<accession>F2RPA4</accession>